<keyword id="KW-0426">Late protein</keyword>
<keyword id="KW-1185">Reference proteome</keyword>
<accession>Q80HX7</accession>
<comment type="function">
    <text evidence="1 2">Stimulates increases in peripheral microtubule dynamics and may increase the motility of the infected cells, contributing to cell-to-cell spread of the virus. Seems to inhibit the signaling via the GTPase RHOA and DIAPH1/mDia.</text>
</comment>
<comment type="induction">
    <text evidence="3">Expressed in the late phase of the viral replicative cycle.</text>
</comment>
<comment type="similarity">
    <text evidence="4">Belongs to the orthopoxvirus OPG055 family.</text>
</comment>
<organismHost>
    <name type="scientific">Bos taurus</name>
    <name type="common">Bovine</name>
    <dbReference type="NCBI Taxonomy" id="9913"/>
</organismHost>
<evidence type="ECO:0000269" key="1">
    <source>
    </source>
</evidence>
<evidence type="ECO:0000269" key="2">
    <source>
    </source>
</evidence>
<evidence type="ECO:0000269" key="3">
    <source>
    </source>
</evidence>
<evidence type="ECO:0000305" key="4"/>
<reference key="1">
    <citation type="submission" date="2003-02" db="EMBL/GenBank/DDBJ databases">
        <title>Sequencing of the coding region of Vaccinia-WR to an average 9-fold redundancy and an error rate of 0.16/10kb.</title>
        <authorList>
            <person name="Esposito J.J."/>
            <person name="Frace A.M."/>
            <person name="Sammons S.A."/>
            <person name="Olsen-Rasmussen M."/>
            <person name="Osborne J."/>
            <person name="Wohlhueter R."/>
        </authorList>
    </citation>
    <scope>NUCLEOTIDE SEQUENCE [LARGE SCALE GENOMIC DNA]</scope>
</reference>
<reference key="2">
    <citation type="journal article" date="2008" name="Traffic">
        <title>The vaccinia virus F11L gene product facilitates cell detachment and promotes migration.</title>
        <authorList>
            <person name="Morales I."/>
            <person name="Carbajal M.A."/>
            <person name="Bohn S."/>
            <person name="Holzer D."/>
            <person name="Kato S.E."/>
            <person name="Greco F.A."/>
            <person name="Moussatche N."/>
            <person name="Krijnse Locker J."/>
        </authorList>
    </citation>
    <scope>FUNCTION</scope>
</reference>
<reference key="3">
    <citation type="journal article" date="2007" name="Cell Host Microbe">
        <title>F11L-mediated inhibition of RhoA-mDia signaling stimulates microtubule dynamics during vaccinia virus infection.</title>
        <authorList>
            <person name="Arakawa Y."/>
            <person name="Cordeiro J.V."/>
            <person name="Way M."/>
        </authorList>
    </citation>
    <scope>FUNCTION</scope>
</reference>
<reference key="4">
    <citation type="journal article" date="2015" name="J. Virol.">
        <title>Deciphering poxvirus gene expression by RNA sequencing and ribosome profiling.</title>
        <authorList>
            <person name="Yang Z."/>
            <person name="Cao S."/>
            <person name="Martens C.A."/>
            <person name="Porcella S.F."/>
            <person name="Xie Z."/>
            <person name="Ma M."/>
            <person name="Shen B."/>
            <person name="Moss B."/>
        </authorList>
    </citation>
    <scope>INDUCTION</scope>
</reference>
<gene>
    <name type="primary">OPG055</name>
    <name type="ordered locus">VACWR050</name>
    <name type="ORF">F11L</name>
</gene>
<protein>
    <recommendedName>
        <fullName>Protein OPG055</fullName>
    </recommendedName>
    <alternativeName>
        <fullName>Protein F11</fullName>
    </alternativeName>
</protein>
<proteinExistence type="evidence at transcript level"/>
<organism>
    <name type="scientific">Vaccinia virus (strain Western Reserve)</name>
    <name type="common">VACV</name>
    <name type="synonym">Vaccinia virus (strain WR)</name>
    <dbReference type="NCBI Taxonomy" id="10254"/>
    <lineage>
        <taxon>Viruses</taxon>
        <taxon>Varidnaviria</taxon>
        <taxon>Bamfordvirae</taxon>
        <taxon>Nucleocytoviricota</taxon>
        <taxon>Pokkesviricetes</taxon>
        <taxon>Chitovirales</taxon>
        <taxon>Poxviridae</taxon>
        <taxon>Chordopoxvirinae</taxon>
        <taxon>Orthopoxvirus</taxon>
        <taxon>Vaccinia virus</taxon>
    </lineage>
</organism>
<dbReference type="EMBL" id="AY243312">
    <property type="protein sequence ID" value="AAO89329.1"/>
    <property type="molecule type" value="Genomic_DNA"/>
</dbReference>
<dbReference type="RefSeq" id="YP_232932.1">
    <property type="nucleotide sequence ID" value="NC_006998.1"/>
</dbReference>
<dbReference type="SMR" id="Q80HX7"/>
<dbReference type="DNASU" id="3707507"/>
<dbReference type="GeneID" id="3707507"/>
<dbReference type="KEGG" id="vg:3707507"/>
<dbReference type="Proteomes" id="UP000000344">
    <property type="component" value="Genome"/>
</dbReference>
<dbReference type="InterPro" id="IPR007027">
    <property type="entry name" value="Poxvirus_F11"/>
</dbReference>
<dbReference type="Pfam" id="PF04943">
    <property type="entry name" value="Pox_F11"/>
    <property type="match status" value="1"/>
</dbReference>
<dbReference type="PIRSF" id="PIRSF015981">
    <property type="entry name" value="VAC_F11L"/>
    <property type="match status" value="1"/>
</dbReference>
<name>PG055_VACCW</name>
<feature type="chain" id="PRO_0000418528" description="Protein OPG055">
    <location>
        <begin position="1"/>
        <end position="348"/>
    </location>
</feature>
<sequence>MGFCIPSRSKMLKRGSRKSSSILARRPTPKKMNIVTDLENRLKKNSYIENTNQGNILMDSIFVSTMPVETLFGSYITDDSDDYELKDLLNVTYNIKPVIVPDIKLDAVLDRDGNFRPADCFLVKLKHRDGFTKGALYLGHSAGFTATICLKNEGVSGLYIPGTSVIRSNICQGDTIVSRSSRGVQFLPQIGGEAIFLIVSLCPTKKLVETGFVIPEISSNDNAKIAARILSEKRKDTIAHINTLIQYRQQLELAYYNSCMLTEFLHYCNSYAGTIKESLLKETIQKDINITHTNITTLLNETAKVIKLVKSLVDKEDTDIVNNFITKEIKNRDKIVNCLSLSNLDFRL</sequence>